<feature type="chain" id="PRO_0000256684" description="NADH-ubiquinone oxidoreductase chain 2">
    <location>
        <begin position="1"/>
        <end position="347"/>
    </location>
</feature>
<feature type="transmembrane region" description="Helical" evidence="3">
    <location>
        <begin position="1"/>
        <end position="21"/>
    </location>
</feature>
<feature type="transmembrane region" description="Helical" evidence="3">
    <location>
        <begin position="25"/>
        <end position="45"/>
    </location>
</feature>
<feature type="transmembrane region" description="Helical" evidence="3">
    <location>
        <begin position="59"/>
        <end position="79"/>
    </location>
</feature>
<feature type="transmembrane region" description="Helical" evidence="3">
    <location>
        <begin position="96"/>
        <end position="116"/>
    </location>
</feature>
<feature type="transmembrane region" description="Helical" evidence="3">
    <location>
        <begin position="122"/>
        <end position="142"/>
    </location>
</feature>
<feature type="transmembrane region" description="Helical" evidence="3">
    <location>
        <begin position="148"/>
        <end position="168"/>
    </location>
</feature>
<feature type="transmembrane region" description="Helical" evidence="3">
    <location>
        <begin position="200"/>
        <end position="220"/>
    </location>
</feature>
<feature type="transmembrane region" description="Helical" evidence="3">
    <location>
        <begin position="240"/>
        <end position="260"/>
    </location>
</feature>
<feature type="transmembrane region" description="Helical" evidence="3">
    <location>
        <begin position="274"/>
        <end position="294"/>
    </location>
</feature>
<feature type="transmembrane region" description="Helical" evidence="3">
    <location>
        <begin position="325"/>
        <end position="345"/>
    </location>
</feature>
<sequence>MNPLIFSIITFTMMLGTGIVMTSSHWLTMWIGFEMNMLAIIPILMKKYNPRSMEASTKYFLTQATASMLLMLAVTINLVHSGQWSTTNPLNPAASIILTLAMAMKLGLSPFHFWVPEVTQGVHLPSGLILLTWQKLAPMSVLYQISPMINLDLMFTMSILSIAIGGWGGLNQTQLRKVMAYSSIAHMGWMTAILAYNPTMALLNLTIYIILTTTTFLTFMTNSTTTTLSLSHLWNKEPLITTIILVTMLSLGGLPPLSGFLPKWMIIQELTKNNSIIAPTTMAITALLNLFFYMRLIYSSALTLFPSMNNTVMKWQLNQTKSTALLSPLTILSTMILPLSPMLMLLE</sequence>
<evidence type="ECO:0000250" key="1">
    <source>
        <dbReference type="UniProtKB" id="P03891"/>
    </source>
</evidence>
<evidence type="ECO:0000250" key="2">
    <source>
        <dbReference type="UniProtKB" id="P03892"/>
    </source>
</evidence>
<evidence type="ECO:0000255" key="3"/>
<evidence type="ECO:0000305" key="4"/>
<dbReference type="EC" id="7.1.1.2" evidence="1"/>
<dbReference type="EMBL" id="AY504598">
    <property type="protein sequence ID" value="AAS91463.1"/>
    <property type="molecule type" value="Genomic_DNA"/>
</dbReference>
<dbReference type="SMR" id="Q32ZZ4"/>
<dbReference type="GO" id="GO:0005743">
    <property type="term" value="C:mitochondrial inner membrane"/>
    <property type="evidence" value="ECO:0000250"/>
    <property type="project" value="UniProtKB"/>
</dbReference>
<dbReference type="GO" id="GO:0008137">
    <property type="term" value="F:NADH dehydrogenase (ubiquinone) activity"/>
    <property type="evidence" value="ECO:0000250"/>
    <property type="project" value="UniProtKB"/>
</dbReference>
<dbReference type="GO" id="GO:0006120">
    <property type="term" value="P:mitochondrial electron transport, NADH to ubiquinone"/>
    <property type="evidence" value="ECO:0000250"/>
    <property type="project" value="UniProtKB"/>
</dbReference>
<dbReference type="GO" id="GO:0032981">
    <property type="term" value="P:mitochondrial respiratory chain complex I assembly"/>
    <property type="evidence" value="ECO:0000250"/>
    <property type="project" value="UniProtKB"/>
</dbReference>
<dbReference type="InterPro" id="IPR050175">
    <property type="entry name" value="Complex_I_Subunit_2"/>
</dbReference>
<dbReference type="InterPro" id="IPR010933">
    <property type="entry name" value="NADH_DH_su2_C"/>
</dbReference>
<dbReference type="InterPro" id="IPR003917">
    <property type="entry name" value="NADH_UbQ_OxRdtase_chain2"/>
</dbReference>
<dbReference type="InterPro" id="IPR001750">
    <property type="entry name" value="ND/Mrp_TM"/>
</dbReference>
<dbReference type="PANTHER" id="PTHR46552">
    <property type="entry name" value="NADH-UBIQUINONE OXIDOREDUCTASE CHAIN 2"/>
    <property type="match status" value="1"/>
</dbReference>
<dbReference type="PANTHER" id="PTHR46552:SF1">
    <property type="entry name" value="NADH-UBIQUINONE OXIDOREDUCTASE CHAIN 2"/>
    <property type="match status" value="1"/>
</dbReference>
<dbReference type="Pfam" id="PF06444">
    <property type="entry name" value="NADH_dehy_S2_C"/>
    <property type="match status" value="1"/>
</dbReference>
<dbReference type="Pfam" id="PF00361">
    <property type="entry name" value="Proton_antipo_M"/>
    <property type="match status" value="1"/>
</dbReference>
<dbReference type="PRINTS" id="PR01436">
    <property type="entry name" value="NADHDHGNASE2"/>
</dbReference>
<gene>
    <name evidence="1" type="primary">MT-ND2</name>
    <name type="synonym">MTND2</name>
    <name type="synonym">NADH2</name>
    <name type="synonym">ND2</name>
</gene>
<reference key="1">
    <citation type="submission" date="2003-12" db="EMBL/GenBank/DDBJ databases">
        <title>Bats and birds: flying in the face of mtDNA evolutionary rates.</title>
        <authorList>
            <person name="Worthington Wilmer J.M."/>
            <person name="Schneider C.J."/>
            <person name="Sorenson M.D."/>
        </authorList>
    </citation>
    <scope>NUCLEOTIDE SEQUENCE [GENOMIC DNA]</scope>
    <source>
        <strain>Isolate SBC1</strain>
    </source>
</reference>
<keyword id="KW-0249">Electron transport</keyword>
<keyword id="KW-0472">Membrane</keyword>
<keyword id="KW-0496">Mitochondrion</keyword>
<keyword id="KW-0999">Mitochondrion inner membrane</keyword>
<keyword id="KW-0520">NAD</keyword>
<keyword id="KW-0679">Respiratory chain</keyword>
<keyword id="KW-1278">Translocase</keyword>
<keyword id="KW-0812">Transmembrane</keyword>
<keyword id="KW-1133">Transmembrane helix</keyword>
<keyword id="KW-0813">Transport</keyword>
<keyword id="KW-0830">Ubiquinone</keyword>
<name>NU2M_THONI</name>
<accession>Q32ZZ4</accession>
<geneLocation type="mitochondrion"/>
<protein>
    <recommendedName>
        <fullName evidence="1">NADH-ubiquinone oxidoreductase chain 2</fullName>
        <ecNumber evidence="1">7.1.1.2</ecNumber>
    </recommendedName>
    <alternativeName>
        <fullName>NADH dehydrogenase subunit 2</fullName>
    </alternativeName>
</protein>
<comment type="function">
    <text evidence="1">Core subunit of the mitochondrial membrane respiratory chain NADH dehydrogenase (Complex I) which catalyzes electron transfer from NADH through the respiratory chain, using ubiquinone as an electron acceptor. Essential for the catalytic activity and assembly of complex I.</text>
</comment>
<comment type="catalytic activity">
    <reaction evidence="1">
        <text>a ubiquinone + NADH + 5 H(+)(in) = a ubiquinol + NAD(+) + 4 H(+)(out)</text>
        <dbReference type="Rhea" id="RHEA:29091"/>
        <dbReference type="Rhea" id="RHEA-COMP:9565"/>
        <dbReference type="Rhea" id="RHEA-COMP:9566"/>
        <dbReference type="ChEBI" id="CHEBI:15378"/>
        <dbReference type="ChEBI" id="CHEBI:16389"/>
        <dbReference type="ChEBI" id="CHEBI:17976"/>
        <dbReference type="ChEBI" id="CHEBI:57540"/>
        <dbReference type="ChEBI" id="CHEBI:57945"/>
        <dbReference type="EC" id="7.1.1.2"/>
    </reaction>
</comment>
<comment type="subunit">
    <text evidence="1 2">Core subunit of respiratory chain NADH dehydrogenase (Complex I) which is composed of 45 different subunits. Interacts with TMEM242 (By similarity).</text>
</comment>
<comment type="subcellular location">
    <subcellularLocation>
        <location evidence="2">Mitochondrion inner membrane</location>
        <topology evidence="3">Multi-pass membrane protein</topology>
    </subcellularLocation>
</comment>
<comment type="similarity">
    <text evidence="4">Belongs to the complex I subunit 2 family.</text>
</comment>
<proteinExistence type="inferred from homology"/>
<organism>
    <name type="scientific">Thoopterus nigrescens</name>
    <name type="common">Swift fruit bat</name>
    <dbReference type="NCBI Taxonomy" id="58087"/>
    <lineage>
        <taxon>Eukaryota</taxon>
        <taxon>Metazoa</taxon>
        <taxon>Chordata</taxon>
        <taxon>Craniata</taxon>
        <taxon>Vertebrata</taxon>
        <taxon>Euteleostomi</taxon>
        <taxon>Mammalia</taxon>
        <taxon>Eutheria</taxon>
        <taxon>Laurasiatheria</taxon>
        <taxon>Chiroptera</taxon>
        <taxon>Yinpterochiroptera</taxon>
        <taxon>Pteropodoidea</taxon>
        <taxon>Pteropodidae</taxon>
        <taxon>Cynopterinae</taxon>
        <taxon>Thoopterus</taxon>
    </lineage>
</organism>